<keyword id="KW-0025">Alternative splicing</keyword>
<keyword id="KW-0963">Cytoplasm</keyword>
<keyword id="KW-1185">Reference proteome</keyword>
<keyword id="KW-0808">Transferase</keyword>
<accession>Q6IMI4</accession>
<accession>B2RTS7</accession>
<proteinExistence type="evidence at transcript level"/>
<feature type="chain" id="PRO_0000085171" description="Sulfotransferase 6B1">
    <location>
        <begin position="1"/>
        <end position="303"/>
    </location>
</feature>
<feature type="active site" description="Proton acceptor" evidence="2">
    <location>
        <position position="118"/>
    </location>
</feature>
<feature type="binding site" evidence="2">
    <location>
        <begin position="65"/>
        <end position="70"/>
    </location>
    <ligand>
        <name>3'-phosphoadenylyl sulfate</name>
        <dbReference type="ChEBI" id="CHEBI:58339"/>
    </ligand>
</feature>
<feature type="binding site" evidence="2">
    <location>
        <position position="140"/>
    </location>
    <ligand>
        <name>3'-phosphoadenylyl sulfate</name>
        <dbReference type="ChEBI" id="CHEBI:58339"/>
    </ligand>
</feature>
<feature type="binding site" evidence="2">
    <location>
        <position position="148"/>
    </location>
    <ligand>
        <name>3'-phosphoadenylyl sulfate</name>
        <dbReference type="ChEBI" id="CHEBI:58339"/>
    </ligand>
</feature>
<feature type="binding site" evidence="2">
    <location>
        <position position="203"/>
    </location>
    <ligand>
        <name>3'-phosphoadenylyl sulfate</name>
        <dbReference type="ChEBI" id="CHEBI:58339"/>
    </ligand>
</feature>
<feature type="binding site" evidence="2">
    <location>
        <begin position="237"/>
        <end position="242"/>
    </location>
    <ligand>
        <name>3'-phosphoadenylyl sulfate</name>
        <dbReference type="ChEBI" id="CHEBI:58339"/>
    </ligand>
</feature>
<feature type="binding site" evidence="2">
    <location>
        <begin position="259"/>
        <end position="261"/>
    </location>
    <ligand>
        <name>3'-phosphoadenylyl sulfate</name>
        <dbReference type="ChEBI" id="CHEBI:58339"/>
    </ligand>
</feature>
<feature type="splice variant" id="VSP_013111" description="In isoform 2." evidence="5">
    <location>
        <begin position="105"/>
        <end position="208"/>
    </location>
</feature>
<feature type="sequence variant" id="VAR_052522" description="In dbSNP:rs45552433.">
    <original>A</original>
    <variation>T</variation>
    <location>
        <position position="61"/>
    </location>
</feature>
<feature type="sequence variant" id="VAR_052523" description="In dbSNP:rs45626240.">
    <original>V</original>
    <variation>D</variation>
    <location>
        <position position="75"/>
    </location>
</feature>
<feature type="sequence variant" id="VAR_052524" description="In dbSNP:rs45493492.">
    <original>K</original>
    <variation>E</variation>
    <location>
        <position position="88"/>
    </location>
</feature>
<feature type="sequence variant" id="VAR_059853" description="In dbSNP:rs10205833." evidence="3">
    <original>L</original>
    <variation>F</variation>
    <location>
        <position position="150"/>
    </location>
</feature>
<feature type="sequence variant" id="VAR_052525" description="In dbSNP:rs7425881.">
    <original>E</original>
    <variation>V</variation>
    <location>
        <position position="167"/>
    </location>
</feature>
<feature type="sequence variant" id="VAR_052526" description="In dbSNP:rs45439591.">
    <original>R</original>
    <variation>S</variation>
    <location>
        <position position="181"/>
    </location>
</feature>
<feature type="sequence variant" id="VAR_052527" description="In dbSNP:rs45495394.">
    <original>K</original>
    <variation>R</variation>
    <location>
        <position position="296"/>
    </location>
</feature>
<sequence>MADKSKFIEYIDEALEKSKETALSHLFFTYQGIPYPITMCTSETFQALDTFEARHDDIVLASYPKCGSNWILHIVSELIYAVSKKKYKYPEFPVLECGDSEKYQRMKGFPSPRILATHLHYDKLPGSIFENKAKILVIFRNPKDTAVSFLHFHNDVPDIPSYGSWDEFFRQFMKGQVSWGRYFDFAINWNKHLDGDNVKFILYEDLKENLAAGIKQIAEFLGFFLTGEQIQTISVQSTFQAMRAKSQDTHGAVGPFLFRKGEVGDWKNLFSEIQNQEMDEKFKECLAGTSLGAKLKYESYCQG</sequence>
<protein>
    <recommendedName>
        <fullName>Sulfotransferase 6B1</fullName>
        <shortName>ST6B1</shortName>
    </recommendedName>
    <alternativeName>
        <fullName>Thyroxine sulfotransferase</fullName>
        <ecNumber evidence="1">2.8.2.n2</ecNumber>
    </alternativeName>
</protein>
<reference key="1">
    <citation type="journal article" date="2005" name="Nature">
        <title>Generation and annotation of the DNA sequences of human chromosomes 2 and 4.</title>
        <authorList>
            <person name="Hillier L.W."/>
            <person name="Graves T.A."/>
            <person name="Fulton R.S."/>
            <person name="Fulton L.A."/>
            <person name="Pepin K.H."/>
            <person name="Minx P."/>
            <person name="Wagner-McPherson C."/>
            <person name="Layman D."/>
            <person name="Wylie K."/>
            <person name="Sekhon M."/>
            <person name="Becker M.C."/>
            <person name="Fewell G.A."/>
            <person name="Delehaunty K.D."/>
            <person name="Miner T.L."/>
            <person name="Nash W.E."/>
            <person name="Kremitzki C."/>
            <person name="Oddy L."/>
            <person name="Du H."/>
            <person name="Sun H."/>
            <person name="Bradshaw-Cordum H."/>
            <person name="Ali J."/>
            <person name="Carter J."/>
            <person name="Cordes M."/>
            <person name="Harris A."/>
            <person name="Isak A."/>
            <person name="van Brunt A."/>
            <person name="Nguyen C."/>
            <person name="Du F."/>
            <person name="Courtney L."/>
            <person name="Kalicki J."/>
            <person name="Ozersky P."/>
            <person name="Abbott S."/>
            <person name="Armstrong J."/>
            <person name="Belter E.A."/>
            <person name="Caruso L."/>
            <person name="Cedroni M."/>
            <person name="Cotton M."/>
            <person name="Davidson T."/>
            <person name="Desai A."/>
            <person name="Elliott G."/>
            <person name="Erb T."/>
            <person name="Fronick C."/>
            <person name="Gaige T."/>
            <person name="Haakenson W."/>
            <person name="Haglund K."/>
            <person name="Holmes A."/>
            <person name="Harkins R."/>
            <person name="Kim K."/>
            <person name="Kruchowski S.S."/>
            <person name="Strong C.M."/>
            <person name="Grewal N."/>
            <person name="Goyea E."/>
            <person name="Hou S."/>
            <person name="Levy A."/>
            <person name="Martinka S."/>
            <person name="Mead K."/>
            <person name="McLellan M.D."/>
            <person name="Meyer R."/>
            <person name="Randall-Maher J."/>
            <person name="Tomlinson C."/>
            <person name="Dauphin-Kohlberg S."/>
            <person name="Kozlowicz-Reilly A."/>
            <person name="Shah N."/>
            <person name="Swearengen-Shahid S."/>
            <person name="Snider J."/>
            <person name="Strong J.T."/>
            <person name="Thompson J."/>
            <person name="Yoakum M."/>
            <person name="Leonard S."/>
            <person name="Pearman C."/>
            <person name="Trani L."/>
            <person name="Radionenko M."/>
            <person name="Waligorski J.E."/>
            <person name="Wang C."/>
            <person name="Rock S.M."/>
            <person name="Tin-Wollam A.-M."/>
            <person name="Maupin R."/>
            <person name="Latreille P."/>
            <person name="Wendl M.C."/>
            <person name="Yang S.-P."/>
            <person name="Pohl C."/>
            <person name="Wallis J.W."/>
            <person name="Spieth J."/>
            <person name="Bieri T.A."/>
            <person name="Berkowicz N."/>
            <person name="Nelson J.O."/>
            <person name="Osborne J."/>
            <person name="Ding L."/>
            <person name="Meyer R."/>
            <person name="Sabo A."/>
            <person name="Shotland Y."/>
            <person name="Sinha P."/>
            <person name="Wohldmann P.E."/>
            <person name="Cook L.L."/>
            <person name="Hickenbotham M.T."/>
            <person name="Eldred J."/>
            <person name="Williams D."/>
            <person name="Jones T.A."/>
            <person name="She X."/>
            <person name="Ciccarelli F.D."/>
            <person name="Izaurralde E."/>
            <person name="Taylor J."/>
            <person name="Schmutz J."/>
            <person name="Myers R.M."/>
            <person name="Cox D.R."/>
            <person name="Huang X."/>
            <person name="McPherson J.D."/>
            <person name="Mardis E.R."/>
            <person name="Clifton S.W."/>
            <person name="Warren W.C."/>
            <person name="Chinwalla A.T."/>
            <person name="Eddy S.R."/>
            <person name="Marra M.A."/>
            <person name="Ovcharenko I."/>
            <person name="Furey T.S."/>
            <person name="Miller W."/>
            <person name="Eichler E.E."/>
            <person name="Bork P."/>
            <person name="Suyama M."/>
            <person name="Torrents D."/>
            <person name="Waterston R.H."/>
            <person name="Wilson R.K."/>
        </authorList>
    </citation>
    <scope>NUCLEOTIDE SEQUENCE [LARGE SCALE GENOMIC DNA]</scope>
</reference>
<reference key="2">
    <citation type="journal article" date="2004" name="Genome Res.">
        <title>The status, quality, and expansion of the NIH full-length cDNA project: the Mammalian Gene Collection (MGC).</title>
        <authorList>
            <consortium name="The MGC Project Team"/>
        </authorList>
    </citation>
    <scope>NUCLEOTIDE SEQUENCE [LARGE SCALE MRNA] OF 32-303</scope>
    <scope>VARIANT PHE-150</scope>
</reference>
<reference key="3">
    <citation type="journal article" date="2004" name="Pharmacogenomics J.">
        <title>Human cytosolic sulfotransferase database mining: identification of seven novel genes and pseudogenes.</title>
        <authorList>
            <person name="Freimuth R.R."/>
            <person name="Wiepert M."/>
            <person name="Chute C.G."/>
            <person name="Wieben E.D."/>
            <person name="Weinshilboum R.M."/>
        </authorList>
    </citation>
    <scope>IDENTIFICATION (ISOFORMS 1 AND 2)</scope>
    <scope>ALTERNATIVE SPLICING</scope>
</reference>
<reference key="4">
    <citation type="journal article" date="2009" name="J. Biochem.">
        <title>Molecular cloning, expression and characterization of a novel mouse SULT6 cytosolic sulfotransferase.</title>
        <authorList>
            <person name="Takahashi S."/>
            <person name="Sakakibara Y."/>
            <person name="Mishiro E."/>
            <person name="Kouriki H."/>
            <person name="Nobe R."/>
            <person name="Kurogi K."/>
            <person name="Yasuda S."/>
            <person name="Liu M.C."/>
            <person name="Suiko M."/>
        </authorList>
    </citation>
    <scope>TISSUE SPECIFICITY</scope>
</reference>
<gene>
    <name type="primary">SULT6B1</name>
</gene>
<organism>
    <name type="scientific">Homo sapiens</name>
    <name type="common">Human</name>
    <dbReference type="NCBI Taxonomy" id="9606"/>
    <lineage>
        <taxon>Eukaryota</taxon>
        <taxon>Metazoa</taxon>
        <taxon>Chordata</taxon>
        <taxon>Craniata</taxon>
        <taxon>Vertebrata</taxon>
        <taxon>Euteleostomi</taxon>
        <taxon>Mammalia</taxon>
        <taxon>Eutheria</taxon>
        <taxon>Euarchontoglires</taxon>
        <taxon>Primates</taxon>
        <taxon>Haplorrhini</taxon>
        <taxon>Catarrhini</taxon>
        <taxon>Hominidae</taxon>
        <taxon>Homo</taxon>
    </lineage>
</organism>
<evidence type="ECO:0000250" key="1">
    <source>
        <dbReference type="UniProtKB" id="P0CC03"/>
    </source>
</evidence>
<evidence type="ECO:0000250" key="2">
    <source>
        <dbReference type="UniProtKB" id="P49891"/>
    </source>
</evidence>
<evidence type="ECO:0000269" key="3">
    <source>
    </source>
</evidence>
<evidence type="ECO:0000269" key="4">
    <source>
    </source>
</evidence>
<evidence type="ECO:0000305" key="5"/>
<dbReference type="EC" id="2.8.2.n2" evidence="1"/>
<dbReference type="EMBL" id="AC007899">
    <property type="status" value="NOT_ANNOTATED_CDS"/>
    <property type="molecule type" value="Genomic_DNA"/>
</dbReference>
<dbReference type="EMBL" id="BC140797">
    <property type="protein sequence ID" value="AAI40798.1"/>
    <property type="status" value="ALT_INIT"/>
    <property type="molecule type" value="mRNA"/>
</dbReference>
<dbReference type="EMBL" id="BK001437">
    <property type="protein sequence ID" value="DAA01772.1"/>
    <property type="status" value="ALT_INIT"/>
    <property type="molecule type" value="Genomic_DNA"/>
</dbReference>
<dbReference type="CCDS" id="CCDS92738.1">
    <molecule id="Q6IMI4-1"/>
</dbReference>
<dbReference type="RefSeq" id="NP_001027549.1">
    <property type="nucleotide sequence ID" value="NM_001032377.1"/>
</dbReference>
<dbReference type="RefSeq" id="NP_001354480.1">
    <molecule id="Q6IMI4-1"/>
    <property type="nucleotide sequence ID" value="NM_001367551.1"/>
</dbReference>
<dbReference type="SMR" id="Q6IMI4"/>
<dbReference type="BioGRID" id="133902">
    <property type="interactions" value="8"/>
</dbReference>
<dbReference type="FunCoup" id="Q6IMI4">
    <property type="interactions" value="428"/>
</dbReference>
<dbReference type="IntAct" id="Q6IMI4">
    <property type="interactions" value="1"/>
</dbReference>
<dbReference type="STRING" id="9606.ENSP00000384950"/>
<dbReference type="DrugBank" id="DB12243">
    <property type="generic name" value="Edaravone"/>
</dbReference>
<dbReference type="DrugBank" id="DB12471">
    <property type="generic name" value="Ibrexafungerp"/>
</dbReference>
<dbReference type="DrugBank" id="DB00968">
    <property type="generic name" value="Methyldopa"/>
</dbReference>
<dbReference type="DrugBank" id="DB00960">
    <property type="generic name" value="Pindolol"/>
</dbReference>
<dbReference type="DrugBank" id="DB00867">
    <property type="generic name" value="Ritodrine"/>
</dbReference>
<dbReference type="DrugBank" id="DB00871">
    <property type="generic name" value="Terbutaline"/>
</dbReference>
<dbReference type="iPTMnet" id="Q6IMI4"/>
<dbReference type="PhosphoSitePlus" id="Q6IMI4"/>
<dbReference type="BioMuta" id="SULT6B1"/>
<dbReference type="DMDM" id="269849654"/>
<dbReference type="PaxDb" id="9606-ENSP00000384950"/>
<dbReference type="PeptideAtlas" id="Q6IMI4"/>
<dbReference type="Antibodypedia" id="29393">
    <property type="antibodies" value="24 antibodies from 13 providers"/>
</dbReference>
<dbReference type="DNASU" id="391365"/>
<dbReference type="Ensembl" id="ENST00000535679.6">
    <molecule id="Q6IMI4-1"/>
    <property type="protein sequence ID" value="ENSP00000444081.1"/>
    <property type="gene ID" value="ENSG00000138068.12"/>
</dbReference>
<dbReference type="GeneID" id="391365"/>
<dbReference type="KEGG" id="hsa:391365"/>
<dbReference type="MANE-Select" id="ENST00000535679.6">
    <property type="protein sequence ID" value="ENSP00000444081.1"/>
    <property type="RefSeq nucleotide sequence ID" value="NM_001367551.1"/>
    <property type="RefSeq protein sequence ID" value="NP_001354480.1"/>
</dbReference>
<dbReference type="UCSC" id="uc002rpu.4">
    <molecule id="Q6IMI4-1"/>
    <property type="organism name" value="human"/>
</dbReference>
<dbReference type="AGR" id="HGNC:33433"/>
<dbReference type="CTD" id="391365"/>
<dbReference type="DisGeNET" id="391365"/>
<dbReference type="GeneCards" id="SULT6B1"/>
<dbReference type="HGNC" id="HGNC:33433">
    <property type="gene designation" value="SULT6B1"/>
</dbReference>
<dbReference type="HPA" id="ENSG00000138068">
    <property type="expression patterns" value="Tissue enriched (testis)"/>
</dbReference>
<dbReference type="MIM" id="617152">
    <property type="type" value="gene"/>
</dbReference>
<dbReference type="neXtProt" id="NX_Q6IMI4"/>
<dbReference type="VEuPathDB" id="HostDB:ENSG00000138068"/>
<dbReference type="eggNOG" id="KOG1584">
    <property type="taxonomic scope" value="Eukaryota"/>
</dbReference>
<dbReference type="GeneTree" id="ENSGT00940000159084"/>
<dbReference type="InParanoid" id="Q6IMI4"/>
<dbReference type="OMA" id="EFPILEC"/>
<dbReference type="OrthoDB" id="205623at2759"/>
<dbReference type="PAN-GO" id="Q6IMI4">
    <property type="GO annotations" value="3 GO annotations based on evolutionary models"/>
</dbReference>
<dbReference type="PhylomeDB" id="Q6IMI4"/>
<dbReference type="TreeFam" id="TF321745"/>
<dbReference type="BRENDA" id="2.8.2.2">
    <property type="organism ID" value="2681"/>
</dbReference>
<dbReference type="PathwayCommons" id="Q6IMI4"/>
<dbReference type="Reactome" id="R-HSA-156584">
    <property type="pathway name" value="Cytosolic sulfonation of small molecules"/>
</dbReference>
<dbReference type="BioGRID-ORCS" id="391365">
    <property type="hits" value="20 hits in 1142 CRISPR screens"/>
</dbReference>
<dbReference type="GenomeRNAi" id="391365"/>
<dbReference type="Pharos" id="Q6IMI4">
    <property type="development level" value="Tdark"/>
</dbReference>
<dbReference type="PRO" id="PR:Q6IMI4"/>
<dbReference type="Proteomes" id="UP000005640">
    <property type="component" value="Chromosome 2"/>
</dbReference>
<dbReference type="RNAct" id="Q6IMI4">
    <property type="molecule type" value="protein"/>
</dbReference>
<dbReference type="Bgee" id="ENSG00000138068">
    <property type="expression patterns" value="Expressed in apex of heart and 68 other cell types or tissues"/>
</dbReference>
<dbReference type="ExpressionAtlas" id="Q6IMI4">
    <property type="expression patterns" value="baseline and differential"/>
</dbReference>
<dbReference type="GO" id="GO:0005737">
    <property type="term" value="C:cytoplasm"/>
    <property type="evidence" value="ECO:0000318"/>
    <property type="project" value="GO_Central"/>
</dbReference>
<dbReference type="GO" id="GO:0005829">
    <property type="term" value="C:cytosol"/>
    <property type="evidence" value="ECO:0000304"/>
    <property type="project" value="Reactome"/>
</dbReference>
<dbReference type="GO" id="GO:0008146">
    <property type="term" value="F:sulfotransferase activity"/>
    <property type="evidence" value="ECO:0007669"/>
    <property type="project" value="InterPro"/>
</dbReference>
<dbReference type="GO" id="GO:0051923">
    <property type="term" value="P:sulfation"/>
    <property type="evidence" value="ECO:0000318"/>
    <property type="project" value="GO_Central"/>
</dbReference>
<dbReference type="FunFam" id="3.40.50.300:FF:002302">
    <property type="entry name" value="Sulfotransferase"/>
    <property type="match status" value="1"/>
</dbReference>
<dbReference type="Gene3D" id="3.40.50.300">
    <property type="entry name" value="P-loop containing nucleotide triphosphate hydrolases"/>
    <property type="match status" value="1"/>
</dbReference>
<dbReference type="InterPro" id="IPR027417">
    <property type="entry name" value="P-loop_NTPase"/>
</dbReference>
<dbReference type="InterPro" id="IPR000863">
    <property type="entry name" value="Sulfotransferase_dom"/>
</dbReference>
<dbReference type="PANTHER" id="PTHR11783">
    <property type="entry name" value="SULFOTRANSFERASE SULT"/>
    <property type="match status" value="1"/>
</dbReference>
<dbReference type="Pfam" id="PF00685">
    <property type="entry name" value="Sulfotransfer_1"/>
    <property type="match status" value="1"/>
</dbReference>
<dbReference type="SUPFAM" id="SSF52540">
    <property type="entry name" value="P-loop containing nucleoside triphosphate hydrolases"/>
    <property type="match status" value="1"/>
</dbReference>
<name>ST6B1_HUMAN</name>
<comment type="function">
    <text evidence="1">Sulfotransferase that utilizes 3'-phospho-5'-adenylyl sulfate (PAPS) as sulfonate donor to catalyze the sulfate conjugation of thyroxine. Involved in the metabolism of thyroxine (By similarity).</text>
</comment>
<comment type="catalytic activity">
    <reaction evidence="1">
        <text>thyroxine + 3'-phosphoadenylyl sulfate = thyroxine sulfate + adenosine 3',5'-bisphosphate + H(+)</text>
        <dbReference type="Rhea" id="RHEA:26422"/>
        <dbReference type="ChEBI" id="CHEBI:15378"/>
        <dbReference type="ChEBI" id="CHEBI:58339"/>
        <dbReference type="ChEBI" id="CHEBI:58343"/>
        <dbReference type="ChEBI" id="CHEBI:58910"/>
        <dbReference type="ChEBI" id="CHEBI:305790"/>
        <dbReference type="EC" id="2.8.2.n2"/>
    </reaction>
</comment>
<comment type="subcellular location">
    <subcellularLocation>
        <location evidence="1">Cytoplasm</location>
        <location evidence="1">Cytosol</location>
    </subcellularLocation>
</comment>
<comment type="alternative products">
    <event type="alternative splicing"/>
    <isoform>
        <id>Q6IMI4-1</id>
        <name>1</name>
        <sequence type="displayed"/>
    </isoform>
    <isoform>
        <id>Q6IMI4-2</id>
        <name>2</name>
        <sequence type="described" ref="VSP_013111"/>
    </isoform>
    <text>Additional isoforms seem to exist.</text>
</comment>
<comment type="tissue specificity">
    <text evidence="4">Specifically expressed in kidney and testis.</text>
</comment>
<comment type="similarity">
    <text evidence="5">Belongs to the sulfotransferase 1 family.</text>
</comment>
<comment type="sequence caution" evidence="5">
    <conflict type="erroneous initiation">
        <sequence resource="EMBL-CDS" id="AAI40798"/>
    </conflict>
</comment>
<comment type="sequence caution" evidence="5">
    <conflict type="erroneous initiation">
        <sequence resource="EMBL-CDS" id="DAA01772"/>
    </conflict>
</comment>